<dbReference type="EC" id="2.7.1.24" evidence="1"/>
<dbReference type="EMBL" id="BX908798">
    <property type="protein sequence ID" value="CAF22946.1"/>
    <property type="molecule type" value="Genomic_DNA"/>
</dbReference>
<dbReference type="RefSeq" id="WP_011174772.1">
    <property type="nucleotide sequence ID" value="NC_005861.2"/>
</dbReference>
<dbReference type="SMR" id="Q6MEQ3"/>
<dbReference type="STRING" id="264201.pc0222"/>
<dbReference type="KEGG" id="pcu:PC_RS01075"/>
<dbReference type="eggNOG" id="COG0237">
    <property type="taxonomic scope" value="Bacteria"/>
</dbReference>
<dbReference type="HOGENOM" id="CLU_057180_3_1_0"/>
<dbReference type="OrthoDB" id="17745at2"/>
<dbReference type="UniPathway" id="UPA00241">
    <property type="reaction ID" value="UER00356"/>
</dbReference>
<dbReference type="Proteomes" id="UP000000529">
    <property type="component" value="Chromosome"/>
</dbReference>
<dbReference type="GO" id="GO:0005737">
    <property type="term" value="C:cytoplasm"/>
    <property type="evidence" value="ECO:0007669"/>
    <property type="project" value="UniProtKB-SubCell"/>
</dbReference>
<dbReference type="GO" id="GO:0005524">
    <property type="term" value="F:ATP binding"/>
    <property type="evidence" value="ECO:0007669"/>
    <property type="project" value="UniProtKB-UniRule"/>
</dbReference>
<dbReference type="GO" id="GO:0004140">
    <property type="term" value="F:dephospho-CoA kinase activity"/>
    <property type="evidence" value="ECO:0007669"/>
    <property type="project" value="UniProtKB-UniRule"/>
</dbReference>
<dbReference type="GO" id="GO:0015937">
    <property type="term" value="P:coenzyme A biosynthetic process"/>
    <property type="evidence" value="ECO:0007669"/>
    <property type="project" value="UniProtKB-UniRule"/>
</dbReference>
<dbReference type="CDD" id="cd02022">
    <property type="entry name" value="DPCK"/>
    <property type="match status" value="1"/>
</dbReference>
<dbReference type="Gene3D" id="3.40.50.300">
    <property type="entry name" value="P-loop containing nucleotide triphosphate hydrolases"/>
    <property type="match status" value="1"/>
</dbReference>
<dbReference type="HAMAP" id="MF_00376">
    <property type="entry name" value="Dephospho_CoA_kinase"/>
    <property type="match status" value="1"/>
</dbReference>
<dbReference type="InterPro" id="IPR001977">
    <property type="entry name" value="Depp_CoAkinase"/>
</dbReference>
<dbReference type="InterPro" id="IPR027417">
    <property type="entry name" value="P-loop_NTPase"/>
</dbReference>
<dbReference type="NCBIfam" id="TIGR00152">
    <property type="entry name" value="dephospho-CoA kinase"/>
    <property type="match status" value="1"/>
</dbReference>
<dbReference type="PANTHER" id="PTHR10695:SF46">
    <property type="entry name" value="BIFUNCTIONAL COENZYME A SYNTHASE-RELATED"/>
    <property type="match status" value="1"/>
</dbReference>
<dbReference type="PANTHER" id="PTHR10695">
    <property type="entry name" value="DEPHOSPHO-COA KINASE-RELATED"/>
    <property type="match status" value="1"/>
</dbReference>
<dbReference type="Pfam" id="PF01121">
    <property type="entry name" value="CoaE"/>
    <property type="match status" value="1"/>
</dbReference>
<dbReference type="SUPFAM" id="SSF52540">
    <property type="entry name" value="P-loop containing nucleoside triphosphate hydrolases"/>
    <property type="match status" value="1"/>
</dbReference>
<dbReference type="PROSITE" id="PS51219">
    <property type="entry name" value="DPCK"/>
    <property type="match status" value="1"/>
</dbReference>
<feature type="chain" id="PRO_0000172971" description="Dephospho-CoA kinase">
    <location>
        <begin position="1"/>
        <end position="203"/>
    </location>
</feature>
<feature type="domain" description="DPCK" evidence="1">
    <location>
        <begin position="6"/>
        <end position="203"/>
    </location>
</feature>
<feature type="binding site" evidence="1">
    <location>
        <begin position="14"/>
        <end position="19"/>
    </location>
    <ligand>
        <name>ATP</name>
        <dbReference type="ChEBI" id="CHEBI:30616"/>
    </ligand>
</feature>
<sequence>MLKLRKVAITGGLSCGKSSVCRILKELGAYAVSADEIVHHLLSSDVNVSQKVVDLLGKSILKNNQIHRSLLAERVFQNYRLLTGLEKILHPAVYGEIEQQYQKQQDSKNQFPFFIAEVPLLYESDGAKFFDTIISVVADPEISLQRFKTHTHKSEKEFQSRMARQISPLEKAIRADYVVLNNGTLSELQQSLRELYQELKIYI</sequence>
<reference key="1">
    <citation type="journal article" date="2004" name="Science">
        <title>Illuminating the evolutionary history of chlamydiae.</title>
        <authorList>
            <person name="Horn M."/>
            <person name="Collingro A."/>
            <person name="Schmitz-Esser S."/>
            <person name="Beier C.L."/>
            <person name="Purkhold U."/>
            <person name="Fartmann B."/>
            <person name="Brandt P."/>
            <person name="Nyakatura G.J."/>
            <person name="Droege M."/>
            <person name="Frishman D."/>
            <person name="Rattei T."/>
            <person name="Mewes H.-W."/>
            <person name="Wagner M."/>
        </authorList>
    </citation>
    <scope>NUCLEOTIDE SEQUENCE [LARGE SCALE GENOMIC DNA]</scope>
    <source>
        <strain>UWE25</strain>
    </source>
</reference>
<evidence type="ECO:0000255" key="1">
    <source>
        <dbReference type="HAMAP-Rule" id="MF_00376"/>
    </source>
</evidence>
<proteinExistence type="inferred from homology"/>
<protein>
    <recommendedName>
        <fullName evidence="1">Dephospho-CoA kinase</fullName>
        <ecNumber evidence="1">2.7.1.24</ecNumber>
    </recommendedName>
    <alternativeName>
        <fullName evidence="1">Dephosphocoenzyme A kinase</fullName>
    </alternativeName>
</protein>
<name>COAE_PARUW</name>
<gene>
    <name evidence="1" type="primary">coaE</name>
    <name type="ordered locus">pc0222</name>
</gene>
<accession>Q6MEQ3</accession>
<keyword id="KW-0067">ATP-binding</keyword>
<keyword id="KW-0173">Coenzyme A biosynthesis</keyword>
<keyword id="KW-0963">Cytoplasm</keyword>
<keyword id="KW-0418">Kinase</keyword>
<keyword id="KW-0547">Nucleotide-binding</keyword>
<keyword id="KW-1185">Reference proteome</keyword>
<keyword id="KW-0808">Transferase</keyword>
<organism>
    <name type="scientific">Protochlamydia amoebophila (strain UWE25)</name>
    <dbReference type="NCBI Taxonomy" id="264201"/>
    <lineage>
        <taxon>Bacteria</taxon>
        <taxon>Pseudomonadati</taxon>
        <taxon>Chlamydiota</taxon>
        <taxon>Chlamydiia</taxon>
        <taxon>Parachlamydiales</taxon>
        <taxon>Parachlamydiaceae</taxon>
        <taxon>Candidatus Protochlamydia</taxon>
    </lineage>
</organism>
<comment type="function">
    <text evidence="1">Catalyzes the phosphorylation of the 3'-hydroxyl group of dephosphocoenzyme A to form coenzyme A.</text>
</comment>
<comment type="catalytic activity">
    <reaction evidence="1">
        <text>3'-dephospho-CoA + ATP = ADP + CoA + H(+)</text>
        <dbReference type="Rhea" id="RHEA:18245"/>
        <dbReference type="ChEBI" id="CHEBI:15378"/>
        <dbReference type="ChEBI" id="CHEBI:30616"/>
        <dbReference type="ChEBI" id="CHEBI:57287"/>
        <dbReference type="ChEBI" id="CHEBI:57328"/>
        <dbReference type="ChEBI" id="CHEBI:456216"/>
        <dbReference type="EC" id="2.7.1.24"/>
    </reaction>
</comment>
<comment type="pathway">
    <text evidence="1">Cofactor biosynthesis; coenzyme A biosynthesis; CoA from (R)-pantothenate: step 5/5.</text>
</comment>
<comment type="subcellular location">
    <subcellularLocation>
        <location evidence="1">Cytoplasm</location>
    </subcellularLocation>
</comment>
<comment type="similarity">
    <text evidence="1">Belongs to the CoaE family.</text>
</comment>